<organism>
    <name type="scientific">Salmonella heidelberg (strain SL476)</name>
    <dbReference type="NCBI Taxonomy" id="454169"/>
    <lineage>
        <taxon>Bacteria</taxon>
        <taxon>Pseudomonadati</taxon>
        <taxon>Pseudomonadota</taxon>
        <taxon>Gammaproteobacteria</taxon>
        <taxon>Enterobacterales</taxon>
        <taxon>Enterobacteriaceae</taxon>
        <taxon>Salmonella</taxon>
    </lineage>
</organism>
<comment type="function">
    <text evidence="1">Catalyzes the phosphorylation of D-glycero-D-manno-heptose 7-phosphate at the C-1 position to selectively form D-glycero-beta-D-manno-heptose-1,7-bisphosphate.</text>
</comment>
<comment type="function">
    <text evidence="1">Catalyzes the ADP transfer from ATP to D-glycero-beta-D-manno-heptose 1-phosphate, yielding ADP-D-glycero-beta-D-manno-heptose.</text>
</comment>
<comment type="catalytic activity">
    <reaction evidence="1">
        <text>D-glycero-beta-D-manno-heptose 7-phosphate + ATP = D-glycero-beta-D-manno-heptose 1,7-bisphosphate + ADP + H(+)</text>
        <dbReference type="Rhea" id="RHEA:27473"/>
        <dbReference type="ChEBI" id="CHEBI:15378"/>
        <dbReference type="ChEBI" id="CHEBI:30616"/>
        <dbReference type="ChEBI" id="CHEBI:60204"/>
        <dbReference type="ChEBI" id="CHEBI:60208"/>
        <dbReference type="ChEBI" id="CHEBI:456216"/>
        <dbReference type="EC" id="2.7.1.167"/>
    </reaction>
</comment>
<comment type="catalytic activity">
    <reaction evidence="1">
        <text>D-glycero-beta-D-manno-heptose 1-phosphate + ATP + H(+) = ADP-D-glycero-beta-D-manno-heptose + diphosphate</text>
        <dbReference type="Rhea" id="RHEA:27465"/>
        <dbReference type="ChEBI" id="CHEBI:15378"/>
        <dbReference type="ChEBI" id="CHEBI:30616"/>
        <dbReference type="ChEBI" id="CHEBI:33019"/>
        <dbReference type="ChEBI" id="CHEBI:59967"/>
        <dbReference type="ChEBI" id="CHEBI:61593"/>
        <dbReference type="EC" id="2.7.7.70"/>
    </reaction>
</comment>
<comment type="pathway">
    <text evidence="1">Nucleotide-sugar biosynthesis; ADP-L-glycero-beta-D-manno-heptose biosynthesis; ADP-L-glycero-beta-D-manno-heptose from D-glycero-beta-D-manno-heptose 7-phosphate: step 1/4.</text>
</comment>
<comment type="pathway">
    <text evidence="1">Nucleotide-sugar biosynthesis; ADP-L-glycero-beta-D-manno-heptose biosynthesis; ADP-L-glycero-beta-D-manno-heptose from D-glycero-beta-D-manno-heptose 7-phosphate: step 3/4.</text>
</comment>
<comment type="subunit">
    <text evidence="1">Homodimer.</text>
</comment>
<comment type="similarity">
    <text evidence="1">In the N-terminal section; belongs to the carbohydrate kinase PfkB family.</text>
</comment>
<comment type="similarity">
    <text evidence="1">In the C-terminal section; belongs to the cytidylyltransferase family.</text>
</comment>
<accession>B4TI51</accession>
<proteinExistence type="inferred from homology"/>
<sequence>MKVNLPAFERAGVMVVGDVMLDRYWYGPTCRISPEAPVPVVKVNTVEERPGGAANVAMNIASLGANARLVGLTGIDDAARALSKTLAEVNVKCDFVSVPTHPTITKLRVLSRNQQLIRLDFEEGFEGVDPQPLHERINQALGSIGALVLSDYAKGALTSVQTMISLARQAGVPVLIDPKGTDFERYRGATLLTPNLSEFEAVAGKCKSEDELVERGMKLIADYDLSALLVTRSEQGMTLLQPNKAPLHMPTQAQEVYDVTGAGDTVIGVLAATLAAGNTLEEACYFANAAAGVVVGKLGTSTVSPIELENAVRGRADTGFGVMTEEELRQAVASARKRGEKVVMTNGVFDILHAGHVSYLANARKLGDRLIVAVNSDASTKRLKGESRPVNPLEQRMIVLGALESVDWVVSFEEDTPQRLIAGILPDLLVKGGDYKPEEIAGSEEVWANGGEVMVLNFEDGCSTTNIIKKIQTESEK</sequence>
<reference key="1">
    <citation type="journal article" date="2011" name="J. Bacteriol.">
        <title>Comparative genomics of 28 Salmonella enterica isolates: evidence for CRISPR-mediated adaptive sublineage evolution.</title>
        <authorList>
            <person name="Fricke W.F."/>
            <person name="Mammel M.K."/>
            <person name="McDermott P.F."/>
            <person name="Tartera C."/>
            <person name="White D.G."/>
            <person name="Leclerc J.E."/>
            <person name="Ravel J."/>
            <person name="Cebula T.A."/>
        </authorList>
    </citation>
    <scope>NUCLEOTIDE SEQUENCE [LARGE SCALE GENOMIC DNA]</scope>
    <source>
        <strain>SL476</strain>
    </source>
</reference>
<gene>
    <name evidence="1" type="primary">hldE</name>
    <name type="ordered locus">SeHA_C3454</name>
</gene>
<dbReference type="EC" id="2.7.1.167" evidence="1"/>
<dbReference type="EC" id="2.7.7.70" evidence="1"/>
<dbReference type="EMBL" id="CP001120">
    <property type="protein sequence ID" value="ACF67723.1"/>
    <property type="molecule type" value="Genomic_DNA"/>
</dbReference>
<dbReference type="RefSeq" id="WP_000867682.1">
    <property type="nucleotide sequence ID" value="NC_011083.1"/>
</dbReference>
<dbReference type="SMR" id="B4TI51"/>
<dbReference type="KEGG" id="seh:SeHA_C3454"/>
<dbReference type="HOGENOM" id="CLU_021150_2_1_6"/>
<dbReference type="UniPathway" id="UPA00356">
    <property type="reaction ID" value="UER00437"/>
</dbReference>
<dbReference type="UniPathway" id="UPA00356">
    <property type="reaction ID" value="UER00439"/>
</dbReference>
<dbReference type="Proteomes" id="UP000001866">
    <property type="component" value="Chromosome"/>
</dbReference>
<dbReference type="GO" id="GO:0005829">
    <property type="term" value="C:cytosol"/>
    <property type="evidence" value="ECO:0007669"/>
    <property type="project" value="TreeGrafter"/>
</dbReference>
<dbReference type="GO" id="GO:0005524">
    <property type="term" value="F:ATP binding"/>
    <property type="evidence" value="ECO:0007669"/>
    <property type="project" value="UniProtKB-UniRule"/>
</dbReference>
<dbReference type="GO" id="GO:0033785">
    <property type="term" value="F:heptose 7-phosphate kinase activity"/>
    <property type="evidence" value="ECO:0007669"/>
    <property type="project" value="UniProtKB-UniRule"/>
</dbReference>
<dbReference type="GO" id="GO:0033786">
    <property type="term" value="F:heptose-1-phosphate adenylyltransferase activity"/>
    <property type="evidence" value="ECO:0007669"/>
    <property type="project" value="UniProtKB-UniRule"/>
</dbReference>
<dbReference type="GO" id="GO:0016773">
    <property type="term" value="F:phosphotransferase activity, alcohol group as acceptor"/>
    <property type="evidence" value="ECO:0007669"/>
    <property type="project" value="InterPro"/>
</dbReference>
<dbReference type="GO" id="GO:0097171">
    <property type="term" value="P:ADP-L-glycero-beta-D-manno-heptose biosynthetic process"/>
    <property type="evidence" value="ECO:0007669"/>
    <property type="project" value="UniProtKB-UniPathway"/>
</dbReference>
<dbReference type="CDD" id="cd01172">
    <property type="entry name" value="RfaE_like"/>
    <property type="match status" value="1"/>
</dbReference>
<dbReference type="FunFam" id="3.40.1190.20:FF:000002">
    <property type="entry name" value="Bifunctional protein HldE"/>
    <property type="match status" value="1"/>
</dbReference>
<dbReference type="FunFam" id="3.40.50.620:FF:000028">
    <property type="entry name" value="Bifunctional protein HldE"/>
    <property type="match status" value="1"/>
</dbReference>
<dbReference type="Gene3D" id="3.40.1190.20">
    <property type="match status" value="1"/>
</dbReference>
<dbReference type="Gene3D" id="3.40.50.620">
    <property type="entry name" value="HUPs"/>
    <property type="match status" value="1"/>
</dbReference>
<dbReference type="HAMAP" id="MF_01603">
    <property type="entry name" value="HldE"/>
    <property type="match status" value="1"/>
</dbReference>
<dbReference type="InterPro" id="IPR023030">
    <property type="entry name" value="Bifunc_HldE"/>
</dbReference>
<dbReference type="InterPro" id="IPR002173">
    <property type="entry name" value="Carboh/pur_kinase_PfkB_CS"/>
</dbReference>
<dbReference type="InterPro" id="IPR004821">
    <property type="entry name" value="Cyt_trans-like"/>
</dbReference>
<dbReference type="InterPro" id="IPR011611">
    <property type="entry name" value="PfkB_dom"/>
</dbReference>
<dbReference type="InterPro" id="IPR011913">
    <property type="entry name" value="RfaE_dom_I"/>
</dbReference>
<dbReference type="InterPro" id="IPR011914">
    <property type="entry name" value="RfaE_dom_II"/>
</dbReference>
<dbReference type="InterPro" id="IPR029056">
    <property type="entry name" value="Ribokinase-like"/>
</dbReference>
<dbReference type="InterPro" id="IPR014729">
    <property type="entry name" value="Rossmann-like_a/b/a_fold"/>
</dbReference>
<dbReference type="NCBIfam" id="TIGR00125">
    <property type="entry name" value="cyt_tran_rel"/>
    <property type="match status" value="1"/>
</dbReference>
<dbReference type="NCBIfam" id="NF008454">
    <property type="entry name" value="PRK11316.1"/>
    <property type="match status" value="1"/>
</dbReference>
<dbReference type="NCBIfam" id="TIGR02198">
    <property type="entry name" value="rfaE_dom_I"/>
    <property type="match status" value="1"/>
</dbReference>
<dbReference type="NCBIfam" id="TIGR02199">
    <property type="entry name" value="rfaE_dom_II"/>
    <property type="match status" value="1"/>
</dbReference>
<dbReference type="PANTHER" id="PTHR46969">
    <property type="entry name" value="BIFUNCTIONAL PROTEIN HLDE"/>
    <property type="match status" value="1"/>
</dbReference>
<dbReference type="PANTHER" id="PTHR46969:SF1">
    <property type="entry name" value="BIFUNCTIONAL PROTEIN HLDE"/>
    <property type="match status" value="1"/>
</dbReference>
<dbReference type="Pfam" id="PF01467">
    <property type="entry name" value="CTP_transf_like"/>
    <property type="match status" value="1"/>
</dbReference>
<dbReference type="Pfam" id="PF00294">
    <property type="entry name" value="PfkB"/>
    <property type="match status" value="1"/>
</dbReference>
<dbReference type="SUPFAM" id="SSF52374">
    <property type="entry name" value="Nucleotidylyl transferase"/>
    <property type="match status" value="1"/>
</dbReference>
<dbReference type="SUPFAM" id="SSF53613">
    <property type="entry name" value="Ribokinase-like"/>
    <property type="match status" value="1"/>
</dbReference>
<dbReference type="PROSITE" id="PS00583">
    <property type="entry name" value="PFKB_KINASES_1"/>
    <property type="match status" value="1"/>
</dbReference>
<feature type="chain" id="PRO_1000185818" description="Bifunctional protein HldE">
    <location>
        <begin position="1"/>
        <end position="477"/>
    </location>
</feature>
<feature type="region of interest" description="Ribokinase">
    <location>
        <begin position="1"/>
        <end position="318"/>
    </location>
</feature>
<feature type="region of interest" description="Cytidylyltransferase">
    <location>
        <begin position="344"/>
        <end position="477"/>
    </location>
</feature>
<feature type="active site" evidence="1">
    <location>
        <position position="264"/>
    </location>
</feature>
<feature type="binding site" evidence="1">
    <location>
        <begin position="195"/>
        <end position="198"/>
    </location>
    <ligand>
        <name>ATP</name>
        <dbReference type="ChEBI" id="CHEBI:30616"/>
    </ligand>
</feature>
<name>HLDE_SALHS</name>
<protein>
    <recommendedName>
        <fullName evidence="1">Bifunctional protein HldE</fullName>
    </recommendedName>
    <domain>
        <recommendedName>
            <fullName evidence="1">D-beta-D-heptose 7-phosphate kinase</fullName>
            <ecNumber evidence="1">2.7.1.167</ecNumber>
        </recommendedName>
        <alternativeName>
            <fullName evidence="1">D-beta-D-heptose 7-phosphotransferase</fullName>
        </alternativeName>
        <alternativeName>
            <fullName evidence="1">D-glycero-beta-D-manno-heptose-7-phosphate kinase</fullName>
        </alternativeName>
    </domain>
    <domain>
        <recommendedName>
            <fullName evidence="1">D-beta-D-heptose 1-phosphate adenylyltransferase</fullName>
            <ecNumber evidence="1">2.7.7.70</ecNumber>
        </recommendedName>
        <alternativeName>
            <fullName evidence="1">D-glycero-beta-D-manno-heptose 1-phosphate adenylyltransferase</fullName>
        </alternativeName>
    </domain>
</protein>
<evidence type="ECO:0000255" key="1">
    <source>
        <dbReference type="HAMAP-Rule" id="MF_01603"/>
    </source>
</evidence>
<keyword id="KW-0067">ATP-binding</keyword>
<keyword id="KW-0119">Carbohydrate metabolism</keyword>
<keyword id="KW-0418">Kinase</keyword>
<keyword id="KW-0511">Multifunctional enzyme</keyword>
<keyword id="KW-0547">Nucleotide-binding</keyword>
<keyword id="KW-0548">Nucleotidyltransferase</keyword>
<keyword id="KW-0808">Transferase</keyword>